<feature type="chain" id="PRO_1000023808" description="Probable malate:quinone oxidoreductase">
    <location>
        <begin position="1"/>
        <end position="493"/>
    </location>
</feature>
<comment type="catalytic activity">
    <reaction evidence="1">
        <text>(S)-malate + a quinone = a quinol + oxaloacetate</text>
        <dbReference type="Rhea" id="RHEA:46012"/>
        <dbReference type="ChEBI" id="CHEBI:15589"/>
        <dbReference type="ChEBI" id="CHEBI:16452"/>
        <dbReference type="ChEBI" id="CHEBI:24646"/>
        <dbReference type="ChEBI" id="CHEBI:132124"/>
        <dbReference type="EC" id="1.1.5.4"/>
    </reaction>
</comment>
<comment type="cofactor">
    <cofactor evidence="1">
        <name>FAD</name>
        <dbReference type="ChEBI" id="CHEBI:57692"/>
    </cofactor>
</comment>
<comment type="pathway">
    <text evidence="1">Carbohydrate metabolism; tricarboxylic acid cycle; oxaloacetate from (S)-malate (quinone route): step 1/1.</text>
</comment>
<comment type="similarity">
    <text evidence="1">Belongs to the MQO family.</text>
</comment>
<keyword id="KW-0274">FAD</keyword>
<keyword id="KW-0285">Flavoprotein</keyword>
<keyword id="KW-0560">Oxidoreductase</keyword>
<keyword id="KW-1185">Reference proteome</keyword>
<keyword id="KW-0816">Tricarboxylic acid cycle</keyword>
<gene>
    <name evidence="1" type="primary">mqo</name>
    <name type="ordered locus">MRA_2875</name>
</gene>
<evidence type="ECO:0000255" key="1">
    <source>
        <dbReference type="HAMAP-Rule" id="MF_00212"/>
    </source>
</evidence>
<reference key="1">
    <citation type="journal article" date="2008" name="PLoS ONE">
        <title>Genetic basis of virulence attenuation revealed by comparative genomic analysis of Mycobacterium tuberculosis strain H37Ra versus H37Rv.</title>
        <authorList>
            <person name="Zheng H."/>
            <person name="Lu L."/>
            <person name="Wang B."/>
            <person name="Pu S."/>
            <person name="Zhang X."/>
            <person name="Zhu G."/>
            <person name="Shi W."/>
            <person name="Zhang L."/>
            <person name="Wang H."/>
            <person name="Wang S."/>
            <person name="Zhao G."/>
            <person name="Zhang Y."/>
        </authorList>
    </citation>
    <scope>NUCLEOTIDE SEQUENCE [LARGE SCALE GENOMIC DNA]</scope>
    <source>
        <strain>ATCC 25177 / H37Ra</strain>
    </source>
</reference>
<organism>
    <name type="scientific">Mycobacterium tuberculosis (strain ATCC 25177 / H37Ra)</name>
    <dbReference type="NCBI Taxonomy" id="419947"/>
    <lineage>
        <taxon>Bacteria</taxon>
        <taxon>Bacillati</taxon>
        <taxon>Actinomycetota</taxon>
        <taxon>Actinomycetes</taxon>
        <taxon>Mycobacteriales</taxon>
        <taxon>Mycobacteriaceae</taxon>
        <taxon>Mycobacterium</taxon>
        <taxon>Mycobacterium tuberculosis complex</taxon>
    </lineage>
</organism>
<accession>A5U6K4</accession>
<sequence length="493" mass="53595">MSDLARTDVVLIGAGIMSATLGVLLRRLEPNWSITLIERLDAVAAESSGPWNNAGTGHSALCEMNYTPEMPDGSIDITKAVRVNEQFQVTRQFWAYAAENGILTDVRSFLNPVPHVSFVHGSRGVEYLRRRQKALAGNPLFAGTEFIESPDEFARRLPFMAAKRAFSEPVALNWAADGTDVDFGALAKQLIGYCVQNGTTALFGHEVRNLSRQSDGSWTVTMCNRRTGEKRKLNTKFVFVGAGGDTLPVLQKSGIKEVKGFAGFPIGGRFLRAGNPALTASHRAKVYGFPAPGAPPLGALHLDLRFVNGKSWLVFGPYAGWSPKFLKHGQISDLPRSIRPDNLLSVLGVGLTERRLLNYLISQLRLSEPERVSALREFAPSAIDSDWELTIAGQRVQVIRRDERNGGVLEFGTTVIGDADGSIAGLLGGSPGASTAVAIMLDVLQKCFANRYQSWLPTLKEMVPSLGVQLSNEPALFDEVWSWSTKALKLGAA</sequence>
<name>MQO_MYCTA</name>
<protein>
    <recommendedName>
        <fullName evidence="1">Probable malate:quinone oxidoreductase</fullName>
        <ecNumber evidence="1">1.1.5.4</ecNumber>
    </recommendedName>
    <alternativeName>
        <fullName evidence="1">MQO</fullName>
    </alternativeName>
    <alternativeName>
        <fullName evidence="1">Malate dehydrogenase [quinone]</fullName>
    </alternativeName>
</protein>
<dbReference type="EC" id="1.1.5.4" evidence="1"/>
<dbReference type="EMBL" id="CP000611">
    <property type="protein sequence ID" value="ABQ74654.1"/>
    <property type="molecule type" value="Genomic_DNA"/>
</dbReference>
<dbReference type="RefSeq" id="WP_003414545.1">
    <property type="nucleotide sequence ID" value="NZ_CP016972.1"/>
</dbReference>
<dbReference type="SMR" id="A5U6K4"/>
<dbReference type="GeneID" id="45426839"/>
<dbReference type="KEGG" id="mra:MRA_2875"/>
<dbReference type="eggNOG" id="COG0579">
    <property type="taxonomic scope" value="Bacteria"/>
</dbReference>
<dbReference type="HOGENOM" id="CLU_028151_0_0_11"/>
<dbReference type="UniPathway" id="UPA00223">
    <property type="reaction ID" value="UER01008"/>
</dbReference>
<dbReference type="Proteomes" id="UP000001988">
    <property type="component" value="Chromosome"/>
</dbReference>
<dbReference type="GO" id="GO:0047545">
    <property type="term" value="F:2-hydroxyglutarate dehydrogenase activity"/>
    <property type="evidence" value="ECO:0007669"/>
    <property type="project" value="TreeGrafter"/>
</dbReference>
<dbReference type="GO" id="GO:0008924">
    <property type="term" value="F:L-malate dehydrogenase (quinone) activity"/>
    <property type="evidence" value="ECO:0007669"/>
    <property type="project" value="UniProtKB-UniRule"/>
</dbReference>
<dbReference type="GO" id="GO:0006099">
    <property type="term" value="P:tricarboxylic acid cycle"/>
    <property type="evidence" value="ECO:0007669"/>
    <property type="project" value="UniProtKB-UniRule"/>
</dbReference>
<dbReference type="Gene3D" id="3.30.9.10">
    <property type="entry name" value="D-Amino Acid Oxidase, subunit A, domain 2"/>
    <property type="match status" value="1"/>
</dbReference>
<dbReference type="Gene3D" id="3.50.50.60">
    <property type="entry name" value="FAD/NAD(P)-binding domain"/>
    <property type="match status" value="1"/>
</dbReference>
<dbReference type="HAMAP" id="MF_00212">
    <property type="entry name" value="MQO"/>
    <property type="match status" value="1"/>
</dbReference>
<dbReference type="InterPro" id="IPR036188">
    <property type="entry name" value="FAD/NAD-bd_sf"/>
</dbReference>
<dbReference type="InterPro" id="IPR006231">
    <property type="entry name" value="MQO"/>
</dbReference>
<dbReference type="NCBIfam" id="TIGR01320">
    <property type="entry name" value="mal_quin_oxido"/>
    <property type="match status" value="1"/>
</dbReference>
<dbReference type="NCBIfam" id="NF003606">
    <property type="entry name" value="PRK05257.2-1"/>
    <property type="match status" value="1"/>
</dbReference>
<dbReference type="NCBIfam" id="NF003611">
    <property type="entry name" value="PRK05257.3-2"/>
    <property type="match status" value="1"/>
</dbReference>
<dbReference type="PANTHER" id="PTHR43104">
    <property type="entry name" value="L-2-HYDROXYGLUTARATE DEHYDROGENASE, MITOCHONDRIAL"/>
    <property type="match status" value="1"/>
</dbReference>
<dbReference type="PANTHER" id="PTHR43104:SF2">
    <property type="entry name" value="L-2-HYDROXYGLUTARATE DEHYDROGENASE, MITOCHONDRIAL"/>
    <property type="match status" value="1"/>
</dbReference>
<dbReference type="Pfam" id="PF06039">
    <property type="entry name" value="Mqo"/>
    <property type="match status" value="1"/>
</dbReference>
<dbReference type="SUPFAM" id="SSF51905">
    <property type="entry name" value="FAD/NAD(P)-binding domain"/>
    <property type="match status" value="1"/>
</dbReference>
<proteinExistence type="inferred from homology"/>